<evidence type="ECO:0000250" key="1">
    <source>
        <dbReference type="UniProtKB" id="Q06053"/>
    </source>
</evidence>
<evidence type="ECO:0000250" key="2">
    <source>
        <dbReference type="UniProtKB" id="Q5SMC7"/>
    </source>
</evidence>
<evidence type="ECO:0000250" key="3">
    <source>
        <dbReference type="UniProtKB" id="Q9UTH9"/>
    </source>
</evidence>
<evidence type="ECO:0000255" key="4">
    <source>
        <dbReference type="PROSITE-ProRule" id="PRU00723"/>
    </source>
</evidence>
<evidence type="ECO:0000256" key="5">
    <source>
        <dbReference type="SAM" id="MobiDB-lite"/>
    </source>
</evidence>
<evidence type="ECO:0000305" key="6"/>
<feature type="chain" id="PRO_0000330233" description="tRNA-dihydrouridine(47) synthase [NAD(P)(+)]">
    <location>
        <begin position="1"/>
        <end position="640"/>
    </location>
</feature>
<feature type="zinc finger region" description="C3H1-type 1" evidence="4">
    <location>
        <begin position="70"/>
        <end position="104"/>
    </location>
</feature>
<feature type="zinc finger region" description="C3H1-type 2" evidence="4">
    <location>
        <begin position="116"/>
        <end position="146"/>
    </location>
</feature>
<feature type="region of interest" description="Disordered" evidence="5">
    <location>
        <begin position="37"/>
        <end position="70"/>
    </location>
</feature>
<feature type="region of interest" description="Disordered" evidence="5">
    <location>
        <begin position="202"/>
        <end position="236"/>
    </location>
</feature>
<feature type="compositionally biased region" description="Basic residues" evidence="5">
    <location>
        <begin position="52"/>
        <end position="61"/>
    </location>
</feature>
<feature type="compositionally biased region" description="Basic and acidic residues" evidence="5">
    <location>
        <begin position="202"/>
        <end position="215"/>
    </location>
</feature>
<feature type="compositionally biased region" description="Basic and acidic residues" evidence="5">
    <location>
        <begin position="222"/>
        <end position="236"/>
    </location>
</feature>
<feature type="active site" description="Proton donor" evidence="2">
    <location>
        <position position="361"/>
    </location>
</feature>
<feature type="binding site" evidence="2">
    <location>
        <begin position="273"/>
        <end position="275"/>
    </location>
    <ligand>
        <name>FMN</name>
        <dbReference type="ChEBI" id="CHEBI:58210"/>
    </ligand>
</feature>
<feature type="binding site" evidence="2">
    <location>
        <position position="328"/>
    </location>
    <ligand>
        <name>FMN</name>
        <dbReference type="ChEBI" id="CHEBI:58210"/>
    </ligand>
</feature>
<feature type="binding site" evidence="2">
    <location>
        <position position="401"/>
    </location>
    <ligand>
        <name>FMN</name>
        <dbReference type="ChEBI" id="CHEBI:58210"/>
    </ligand>
</feature>
<feature type="binding site" evidence="2">
    <location>
        <position position="432"/>
    </location>
    <ligand>
        <name>FMN</name>
        <dbReference type="ChEBI" id="CHEBI:58210"/>
    </ligand>
</feature>
<feature type="binding site" evidence="2">
    <location>
        <begin position="486"/>
        <end position="488"/>
    </location>
    <ligand>
        <name>FMN</name>
        <dbReference type="ChEBI" id="CHEBI:58210"/>
    </ligand>
</feature>
<feature type="binding site" evidence="2">
    <location>
        <begin position="510"/>
        <end position="511"/>
    </location>
    <ligand>
        <name>FMN</name>
        <dbReference type="ChEBI" id="CHEBI:58210"/>
    </ligand>
</feature>
<name>DUS3_CANGA</name>
<protein>
    <recommendedName>
        <fullName>tRNA-dihydrouridine(47) synthase [NAD(P)(+)]</fullName>
        <ecNumber evidence="1">1.3.1.89</ecNumber>
    </recommendedName>
    <alternativeName>
        <fullName>mRNA-dihydrouridine synthase DUS3</fullName>
        <ecNumber evidence="3">1.3.1.-</ecNumber>
    </alternativeName>
    <alternativeName>
        <fullName>tRNA-dihydrouridine synthase 3</fullName>
    </alternativeName>
</protein>
<reference key="1">
    <citation type="journal article" date="2004" name="Nature">
        <title>Genome evolution in yeasts.</title>
        <authorList>
            <person name="Dujon B."/>
            <person name="Sherman D."/>
            <person name="Fischer G."/>
            <person name="Durrens P."/>
            <person name="Casaregola S."/>
            <person name="Lafontaine I."/>
            <person name="de Montigny J."/>
            <person name="Marck C."/>
            <person name="Neuveglise C."/>
            <person name="Talla E."/>
            <person name="Goffard N."/>
            <person name="Frangeul L."/>
            <person name="Aigle M."/>
            <person name="Anthouard V."/>
            <person name="Babour A."/>
            <person name="Barbe V."/>
            <person name="Barnay S."/>
            <person name="Blanchin S."/>
            <person name="Beckerich J.-M."/>
            <person name="Beyne E."/>
            <person name="Bleykasten C."/>
            <person name="Boisrame A."/>
            <person name="Boyer J."/>
            <person name="Cattolico L."/>
            <person name="Confanioleri F."/>
            <person name="de Daruvar A."/>
            <person name="Despons L."/>
            <person name="Fabre E."/>
            <person name="Fairhead C."/>
            <person name="Ferry-Dumazet H."/>
            <person name="Groppi A."/>
            <person name="Hantraye F."/>
            <person name="Hennequin C."/>
            <person name="Jauniaux N."/>
            <person name="Joyet P."/>
            <person name="Kachouri R."/>
            <person name="Kerrest A."/>
            <person name="Koszul R."/>
            <person name="Lemaire M."/>
            <person name="Lesur I."/>
            <person name="Ma L."/>
            <person name="Muller H."/>
            <person name="Nicaud J.-M."/>
            <person name="Nikolski M."/>
            <person name="Oztas S."/>
            <person name="Ozier-Kalogeropoulos O."/>
            <person name="Pellenz S."/>
            <person name="Potier S."/>
            <person name="Richard G.-F."/>
            <person name="Straub M.-L."/>
            <person name="Suleau A."/>
            <person name="Swennen D."/>
            <person name="Tekaia F."/>
            <person name="Wesolowski-Louvel M."/>
            <person name="Westhof E."/>
            <person name="Wirth B."/>
            <person name="Zeniou-Meyer M."/>
            <person name="Zivanovic Y."/>
            <person name="Bolotin-Fukuhara M."/>
            <person name="Thierry A."/>
            <person name="Bouchier C."/>
            <person name="Caudron B."/>
            <person name="Scarpelli C."/>
            <person name="Gaillardin C."/>
            <person name="Weissenbach J."/>
            <person name="Wincker P."/>
            <person name="Souciet J.-L."/>
        </authorList>
    </citation>
    <scope>NUCLEOTIDE SEQUENCE [LARGE SCALE GENOMIC DNA]</scope>
    <source>
        <strain>ATCC 2001 / BCRC 20586 / JCM 3761 / NBRC 0622 / NRRL Y-65 / CBS 138</strain>
    </source>
</reference>
<dbReference type="EC" id="1.3.1.89" evidence="1"/>
<dbReference type="EC" id="1.3.1.-" evidence="3"/>
<dbReference type="EMBL" id="CR380959">
    <property type="protein sequence ID" value="CAG62758.1"/>
    <property type="molecule type" value="Genomic_DNA"/>
</dbReference>
<dbReference type="RefSeq" id="XP_449780.1">
    <property type="nucleotide sequence ID" value="XM_449780.1"/>
</dbReference>
<dbReference type="SMR" id="Q6FJ14"/>
<dbReference type="FunCoup" id="Q6FJ14">
    <property type="interactions" value="957"/>
</dbReference>
<dbReference type="STRING" id="284593.Q6FJ14"/>
<dbReference type="EnsemblFungi" id="CAGL0M09977g-T">
    <property type="protein sequence ID" value="CAGL0M09977g-T-p1"/>
    <property type="gene ID" value="CAGL0M09977g"/>
</dbReference>
<dbReference type="KEGG" id="cgr:2891344"/>
<dbReference type="CGD" id="CAL0136961">
    <property type="gene designation" value="CAGL0M09977g"/>
</dbReference>
<dbReference type="VEuPathDB" id="FungiDB:CAGL0M09977g"/>
<dbReference type="eggNOG" id="KOG2333">
    <property type="taxonomic scope" value="Eukaryota"/>
</dbReference>
<dbReference type="HOGENOM" id="CLU_013299_7_0_1"/>
<dbReference type="InParanoid" id="Q6FJ14"/>
<dbReference type="OMA" id="WSYIAEC"/>
<dbReference type="Proteomes" id="UP000002428">
    <property type="component" value="Chromosome M"/>
</dbReference>
<dbReference type="GO" id="GO:0005737">
    <property type="term" value="C:cytoplasm"/>
    <property type="evidence" value="ECO:0007669"/>
    <property type="project" value="UniProtKB-SubCell"/>
</dbReference>
<dbReference type="GO" id="GO:0034399">
    <property type="term" value="C:nuclear periphery"/>
    <property type="evidence" value="ECO:0007669"/>
    <property type="project" value="EnsemblFungi"/>
</dbReference>
<dbReference type="GO" id="GO:0050660">
    <property type="term" value="F:flavin adenine dinucleotide binding"/>
    <property type="evidence" value="ECO:0007669"/>
    <property type="project" value="InterPro"/>
</dbReference>
<dbReference type="GO" id="GO:0106414">
    <property type="term" value="F:mRNA dihydrouridine synthase activity"/>
    <property type="evidence" value="ECO:0007669"/>
    <property type="project" value="RHEA"/>
</dbReference>
<dbReference type="GO" id="GO:0003723">
    <property type="term" value="F:RNA binding"/>
    <property type="evidence" value="ECO:0007669"/>
    <property type="project" value="TreeGrafter"/>
</dbReference>
<dbReference type="GO" id="GO:0102265">
    <property type="term" value="F:tRNA-dihydrouridine47 synthase activity"/>
    <property type="evidence" value="ECO:0007669"/>
    <property type="project" value="UniProtKB-EC"/>
</dbReference>
<dbReference type="GO" id="GO:0008270">
    <property type="term" value="F:zinc ion binding"/>
    <property type="evidence" value="ECO:0007669"/>
    <property type="project" value="UniProtKB-KW"/>
</dbReference>
<dbReference type="GO" id="GO:0006397">
    <property type="term" value="P:mRNA processing"/>
    <property type="evidence" value="ECO:0007669"/>
    <property type="project" value="UniProtKB-KW"/>
</dbReference>
<dbReference type="CDD" id="cd02801">
    <property type="entry name" value="DUS_like_FMN"/>
    <property type="match status" value="1"/>
</dbReference>
<dbReference type="FunFam" id="3.20.20.70:FF:000145">
    <property type="entry name" value="tRNA-dihydrouridine(47) synthase [NAD(P)(+)]"/>
    <property type="match status" value="1"/>
</dbReference>
<dbReference type="FunFam" id="4.10.1000.10:FF:000029">
    <property type="entry name" value="tRNA-dihydrouridine(47) synthase [NAD(P)(+)]"/>
    <property type="match status" value="1"/>
</dbReference>
<dbReference type="Gene3D" id="3.20.20.70">
    <property type="entry name" value="Aldolase class I"/>
    <property type="match status" value="1"/>
</dbReference>
<dbReference type="Gene3D" id="4.10.1000.10">
    <property type="entry name" value="Zinc finger, CCCH-type"/>
    <property type="match status" value="1"/>
</dbReference>
<dbReference type="InterPro" id="IPR013785">
    <property type="entry name" value="Aldolase_TIM"/>
</dbReference>
<dbReference type="InterPro" id="IPR035587">
    <property type="entry name" value="DUS-like_FMN-bd"/>
</dbReference>
<dbReference type="InterPro" id="IPR018517">
    <property type="entry name" value="tRNA_hU_synthase_CS"/>
</dbReference>
<dbReference type="InterPro" id="IPR041367">
    <property type="entry name" value="Znf-CCCH_4"/>
</dbReference>
<dbReference type="InterPro" id="IPR000571">
    <property type="entry name" value="Znf_CCCH"/>
</dbReference>
<dbReference type="PANTHER" id="PTHR45846">
    <property type="entry name" value="TRNA-DIHYDROURIDINE(47) SYNTHASE [NAD(P)(+)]-LIKE"/>
    <property type="match status" value="1"/>
</dbReference>
<dbReference type="PANTHER" id="PTHR45846:SF1">
    <property type="entry name" value="TRNA-DIHYDROURIDINE(47) SYNTHASE [NAD(P)(+)]-LIKE"/>
    <property type="match status" value="1"/>
</dbReference>
<dbReference type="Pfam" id="PF01207">
    <property type="entry name" value="Dus"/>
    <property type="match status" value="2"/>
</dbReference>
<dbReference type="Pfam" id="PF18044">
    <property type="entry name" value="zf-CCCH_4"/>
    <property type="match status" value="1"/>
</dbReference>
<dbReference type="SUPFAM" id="SSF51395">
    <property type="entry name" value="FMN-linked oxidoreductases"/>
    <property type="match status" value="1"/>
</dbReference>
<dbReference type="PROSITE" id="PS01136">
    <property type="entry name" value="UPF0034"/>
    <property type="match status" value="1"/>
</dbReference>
<dbReference type="PROSITE" id="PS50103">
    <property type="entry name" value="ZF_C3H1"/>
    <property type="match status" value="2"/>
</dbReference>
<organism>
    <name type="scientific">Candida glabrata (strain ATCC 2001 / BCRC 20586 / JCM 3761 / NBRC 0622 / NRRL Y-65 / CBS 138)</name>
    <name type="common">Yeast</name>
    <name type="synonym">Nakaseomyces glabratus</name>
    <dbReference type="NCBI Taxonomy" id="284593"/>
    <lineage>
        <taxon>Eukaryota</taxon>
        <taxon>Fungi</taxon>
        <taxon>Dikarya</taxon>
        <taxon>Ascomycota</taxon>
        <taxon>Saccharomycotina</taxon>
        <taxon>Saccharomycetes</taxon>
        <taxon>Saccharomycetales</taxon>
        <taxon>Saccharomycetaceae</taxon>
        <taxon>Nakaseomyces</taxon>
    </lineage>
</organism>
<sequence>MKRELEGSYESERKRGVAQVKAEYVVGAASNVRVDEEEAGSERFVQGEFGGKKNKKKRGQNKNRDNRQQKETHALCPKYVLADVTNQVDLCTFGDNCRFVHDIPTYLEHKRPEITDSVFKTCPVFETLGYCPMGFKCRFLSSHMDKETHKLLGEYPSDLASASHEINHITQDQKYDLIKKRFPFSKSELVLEILDSFQEENREMHREAEKVKEDQQDNEDEQKEKAPQVVQRELEAQKRRQRQKDLYLQYKDTRFFAQEKKPLDLRHKKIVSPLTTVGNLPYRRLMRTLGADVTYSEMALAVPLVQGTNSEWALPKAHESEYPGFGVQVACSKGWQASKAAEALATYIPNGISEINLNSGCPIDLLYRQGSGSALLDNPARMIRCLNAMNYVSGDIPITVKIRTGTKEGHPIADTLVRRLVFETDVAAITLHGRSRQQRYTKVADWDYVSQVAKALRQAEADFMESPQGKESHHDEKTRHTQFVGNGDIFNYTDWYQHLEDPEVDSCMVARGALIKPWIFEEINAQQHLDKTSSERLEILKTYSKFAMDHWGTDEYGIALGRRFFCEFMSFFHRYIPVGILERVPVQLNERPPLWKGRDDMETLLGSSDVKDWIKLSEMFFGPTEDSFVFTPKHKSSSYK</sequence>
<keyword id="KW-0963">Cytoplasm</keyword>
<keyword id="KW-0285">Flavoprotein</keyword>
<keyword id="KW-0288">FMN</keyword>
<keyword id="KW-0479">Metal-binding</keyword>
<keyword id="KW-0507">mRNA processing</keyword>
<keyword id="KW-0520">NAD</keyword>
<keyword id="KW-0521">NADP</keyword>
<keyword id="KW-0539">Nucleus</keyword>
<keyword id="KW-0560">Oxidoreductase</keyword>
<keyword id="KW-1185">Reference proteome</keyword>
<keyword id="KW-0677">Repeat</keyword>
<keyword id="KW-0819">tRNA processing</keyword>
<keyword id="KW-0862">Zinc</keyword>
<keyword id="KW-0863">Zinc-finger</keyword>
<proteinExistence type="inferred from homology"/>
<accession>Q6FJ14</accession>
<gene>
    <name type="primary">DUS3</name>
    <name type="ordered locus">CAGL0M09977g</name>
</gene>
<comment type="function">
    <text evidence="1 3">Catalyzes the synthesis of dihydrouridine, a modified base found in the D-loop of most tRNAs. Specifically modifies U47 in cytoplasmic tRNAs (By similarity). Catalyzes the synthesis of dihydrouridine in some mRNAs, thereby affecting their translation (By similarity).</text>
</comment>
<comment type="catalytic activity">
    <reaction evidence="1">
        <text>5,6-dihydrouridine(47) in tRNA + NAD(+) = uridine(47) in tRNA + NADH + H(+)</text>
        <dbReference type="Rhea" id="RHEA:53364"/>
        <dbReference type="Rhea" id="RHEA-COMP:13539"/>
        <dbReference type="Rhea" id="RHEA-COMP:13540"/>
        <dbReference type="ChEBI" id="CHEBI:15378"/>
        <dbReference type="ChEBI" id="CHEBI:57540"/>
        <dbReference type="ChEBI" id="CHEBI:57945"/>
        <dbReference type="ChEBI" id="CHEBI:65315"/>
        <dbReference type="ChEBI" id="CHEBI:74443"/>
        <dbReference type="EC" id="1.3.1.89"/>
    </reaction>
    <physiologicalReaction direction="right-to-left" evidence="1">
        <dbReference type="Rhea" id="RHEA:53366"/>
    </physiologicalReaction>
</comment>
<comment type="catalytic activity">
    <reaction evidence="1">
        <text>5,6-dihydrouridine(47) in tRNA + NADP(+) = uridine(47) in tRNA + NADPH + H(+)</text>
        <dbReference type="Rhea" id="RHEA:53360"/>
        <dbReference type="Rhea" id="RHEA-COMP:13539"/>
        <dbReference type="Rhea" id="RHEA-COMP:13540"/>
        <dbReference type="ChEBI" id="CHEBI:15378"/>
        <dbReference type="ChEBI" id="CHEBI:57783"/>
        <dbReference type="ChEBI" id="CHEBI:58349"/>
        <dbReference type="ChEBI" id="CHEBI:65315"/>
        <dbReference type="ChEBI" id="CHEBI:74443"/>
        <dbReference type="EC" id="1.3.1.89"/>
    </reaction>
    <physiologicalReaction direction="right-to-left" evidence="1">
        <dbReference type="Rhea" id="RHEA:53362"/>
    </physiologicalReaction>
</comment>
<comment type="catalytic activity">
    <reaction evidence="3">
        <text>a 5,6-dihydrouridine in mRNA + NAD(+) = a uridine in mRNA + NADH + H(+)</text>
        <dbReference type="Rhea" id="RHEA:69851"/>
        <dbReference type="Rhea" id="RHEA-COMP:14658"/>
        <dbReference type="Rhea" id="RHEA-COMP:17789"/>
        <dbReference type="ChEBI" id="CHEBI:15378"/>
        <dbReference type="ChEBI" id="CHEBI:57540"/>
        <dbReference type="ChEBI" id="CHEBI:57945"/>
        <dbReference type="ChEBI" id="CHEBI:65315"/>
        <dbReference type="ChEBI" id="CHEBI:74443"/>
    </reaction>
    <physiologicalReaction direction="right-to-left" evidence="3">
        <dbReference type="Rhea" id="RHEA:69853"/>
    </physiologicalReaction>
</comment>
<comment type="catalytic activity">
    <reaction evidence="3">
        <text>a 5,6-dihydrouridine in mRNA + NADP(+) = a uridine in mRNA + NADPH + H(+)</text>
        <dbReference type="Rhea" id="RHEA:69855"/>
        <dbReference type="Rhea" id="RHEA-COMP:14658"/>
        <dbReference type="Rhea" id="RHEA-COMP:17789"/>
        <dbReference type="ChEBI" id="CHEBI:15378"/>
        <dbReference type="ChEBI" id="CHEBI:57783"/>
        <dbReference type="ChEBI" id="CHEBI:58349"/>
        <dbReference type="ChEBI" id="CHEBI:65315"/>
        <dbReference type="ChEBI" id="CHEBI:74443"/>
    </reaction>
    <physiologicalReaction direction="right-to-left" evidence="3">
        <dbReference type="Rhea" id="RHEA:69857"/>
    </physiologicalReaction>
</comment>
<comment type="cofactor">
    <cofactor evidence="2">
        <name>FMN</name>
        <dbReference type="ChEBI" id="CHEBI:58210"/>
    </cofactor>
</comment>
<comment type="subcellular location">
    <subcellularLocation>
        <location evidence="1">Cytoplasm</location>
    </subcellularLocation>
    <subcellularLocation>
        <location evidence="1">Nucleus</location>
    </subcellularLocation>
</comment>
<comment type="similarity">
    <text evidence="6">Belongs to the Dus family. Dus3 subfamily.</text>
</comment>